<proteinExistence type="inferred from homology"/>
<sequence>MGQKVHPNGIRLGITKPWISTWYADKSDYANNLNSDWEVRQYLTEKLKAASVSKIVIERPAKSIRVTIHTARPGIVIGKKGEDVEVLRAYVSKITGTTAQINIAEIRKPELDAKLVADSIAQQLERRVMFRRAMKRAVQNAMRIGAQGIKVQVSGRLGGAEIARAEWYREGRVPLHTLRADIDYSTAESHTQYGVIGIKVWIFKGEVLDGLVPAIEEPKQQPKRKPRGK</sequence>
<reference key="1">
    <citation type="submission" date="2006-08" db="EMBL/GenBank/DDBJ databases">
        <title>Complete sequence of Shewanella frigidimarina NCIMB 400.</title>
        <authorList>
            <consortium name="US DOE Joint Genome Institute"/>
            <person name="Copeland A."/>
            <person name="Lucas S."/>
            <person name="Lapidus A."/>
            <person name="Barry K."/>
            <person name="Detter J.C."/>
            <person name="Glavina del Rio T."/>
            <person name="Hammon N."/>
            <person name="Israni S."/>
            <person name="Dalin E."/>
            <person name="Tice H."/>
            <person name="Pitluck S."/>
            <person name="Fredrickson J.K."/>
            <person name="Kolker E."/>
            <person name="McCuel L.A."/>
            <person name="DiChristina T."/>
            <person name="Nealson K.H."/>
            <person name="Newman D."/>
            <person name="Tiedje J.M."/>
            <person name="Zhou J."/>
            <person name="Romine M.F."/>
            <person name="Culley D.E."/>
            <person name="Serres M."/>
            <person name="Chertkov O."/>
            <person name="Brettin T."/>
            <person name="Bruce D."/>
            <person name="Han C."/>
            <person name="Tapia R."/>
            <person name="Gilna P."/>
            <person name="Schmutz J."/>
            <person name="Larimer F."/>
            <person name="Land M."/>
            <person name="Hauser L."/>
            <person name="Kyrpides N."/>
            <person name="Mikhailova N."/>
            <person name="Richardson P."/>
        </authorList>
    </citation>
    <scope>NUCLEOTIDE SEQUENCE [LARGE SCALE GENOMIC DNA]</scope>
    <source>
        <strain>NCIMB 400</strain>
    </source>
</reference>
<organism>
    <name type="scientific">Shewanella frigidimarina (strain NCIMB 400)</name>
    <dbReference type="NCBI Taxonomy" id="318167"/>
    <lineage>
        <taxon>Bacteria</taxon>
        <taxon>Pseudomonadati</taxon>
        <taxon>Pseudomonadota</taxon>
        <taxon>Gammaproteobacteria</taxon>
        <taxon>Alteromonadales</taxon>
        <taxon>Shewanellaceae</taxon>
        <taxon>Shewanella</taxon>
    </lineage>
</organism>
<feature type="chain" id="PRO_0000293880" description="Small ribosomal subunit protein uS3">
    <location>
        <begin position="1"/>
        <end position="229"/>
    </location>
</feature>
<feature type="domain" description="KH type-2" evidence="1">
    <location>
        <begin position="39"/>
        <end position="107"/>
    </location>
</feature>
<accession>Q089P8</accession>
<gene>
    <name evidence="1" type="primary">rpsC</name>
    <name type="ordered locus">Sfri_0154</name>
</gene>
<name>RS3_SHEFN</name>
<comment type="function">
    <text evidence="1">Binds the lower part of the 30S subunit head. Binds mRNA in the 70S ribosome, positioning it for translation.</text>
</comment>
<comment type="subunit">
    <text evidence="1">Part of the 30S ribosomal subunit. Forms a tight complex with proteins S10 and S14.</text>
</comment>
<comment type="similarity">
    <text evidence="1">Belongs to the universal ribosomal protein uS3 family.</text>
</comment>
<keyword id="KW-1185">Reference proteome</keyword>
<keyword id="KW-0687">Ribonucleoprotein</keyword>
<keyword id="KW-0689">Ribosomal protein</keyword>
<keyword id="KW-0694">RNA-binding</keyword>
<keyword id="KW-0699">rRNA-binding</keyword>
<evidence type="ECO:0000255" key="1">
    <source>
        <dbReference type="HAMAP-Rule" id="MF_01309"/>
    </source>
</evidence>
<evidence type="ECO:0000305" key="2"/>
<dbReference type="EMBL" id="CP000447">
    <property type="protein sequence ID" value="ABI70017.1"/>
    <property type="molecule type" value="Genomic_DNA"/>
</dbReference>
<dbReference type="RefSeq" id="WP_011635645.1">
    <property type="nucleotide sequence ID" value="NC_008345.1"/>
</dbReference>
<dbReference type="SMR" id="Q089P8"/>
<dbReference type="STRING" id="318167.Sfri_0154"/>
<dbReference type="KEGG" id="sfr:Sfri_0154"/>
<dbReference type="eggNOG" id="COG0092">
    <property type="taxonomic scope" value="Bacteria"/>
</dbReference>
<dbReference type="HOGENOM" id="CLU_058591_0_2_6"/>
<dbReference type="OrthoDB" id="9806396at2"/>
<dbReference type="Proteomes" id="UP000000684">
    <property type="component" value="Chromosome"/>
</dbReference>
<dbReference type="GO" id="GO:0022627">
    <property type="term" value="C:cytosolic small ribosomal subunit"/>
    <property type="evidence" value="ECO:0007669"/>
    <property type="project" value="TreeGrafter"/>
</dbReference>
<dbReference type="GO" id="GO:0003729">
    <property type="term" value="F:mRNA binding"/>
    <property type="evidence" value="ECO:0007669"/>
    <property type="project" value="UniProtKB-UniRule"/>
</dbReference>
<dbReference type="GO" id="GO:0019843">
    <property type="term" value="F:rRNA binding"/>
    <property type="evidence" value="ECO:0007669"/>
    <property type="project" value="UniProtKB-UniRule"/>
</dbReference>
<dbReference type="GO" id="GO:0003735">
    <property type="term" value="F:structural constituent of ribosome"/>
    <property type="evidence" value="ECO:0007669"/>
    <property type="project" value="InterPro"/>
</dbReference>
<dbReference type="GO" id="GO:0006412">
    <property type="term" value="P:translation"/>
    <property type="evidence" value="ECO:0007669"/>
    <property type="project" value="UniProtKB-UniRule"/>
</dbReference>
<dbReference type="CDD" id="cd02412">
    <property type="entry name" value="KH-II_30S_S3"/>
    <property type="match status" value="1"/>
</dbReference>
<dbReference type="FunFam" id="3.30.1140.32:FF:000001">
    <property type="entry name" value="30S ribosomal protein S3"/>
    <property type="match status" value="1"/>
</dbReference>
<dbReference type="FunFam" id="3.30.300.20:FF:000001">
    <property type="entry name" value="30S ribosomal protein S3"/>
    <property type="match status" value="1"/>
</dbReference>
<dbReference type="Gene3D" id="3.30.300.20">
    <property type="match status" value="1"/>
</dbReference>
<dbReference type="Gene3D" id="3.30.1140.32">
    <property type="entry name" value="Ribosomal protein S3, C-terminal domain"/>
    <property type="match status" value="1"/>
</dbReference>
<dbReference type="HAMAP" id="MF_01309_B">
    <property type="entry name" value="Ribosomal_uS3_B"/>
    <property type="match status" value="1"/>
</dbReference>
<dbReference type="InterPro" id="IPR004087">
    <property type="entry name" value="KH_dom"/>
</dbReference>
<dbReference type="InterPro" id="IPR015946">
    <property type="entry name" value="KH_dom-like_a/b"/>
</dbReference>
<dbReference type="InterPro" id="IPR004044">
    <property type="entry name" value="KH_dom_type_2"/>
</dbReference>
<dbReference type="InterPro" id="IPR009019">
    <property type="entry name" value="KH_sf_prok-type"/>
</dbReference>
<dbReference type="InterPro" id="IPR036419">
    <property type="entry name" value="Ribosomal_S3_C_sf"/>
</dbReference>
<dbReference type="InterPro" id="IPR005704">
    <property type="entry name" value="Ribosomal_uS3_bac-typ"/>
</dbReference>
<dbReference type="InterPro" id="IPR001351">
    <property type="entry name" value="Ribosomal_uS3_C"/>
</dbReference>
<dbReference type="InterPro" id="IPR018280">
    <property type="entry name" value="Ribosomal_uS3_CS"/>
</dbReference>
<dbReference type="NCBIfam" id="TIGR01009">
    <property type="entry name" value="rpsC_bact"/>
    <property type="match status" value="1"/>
</dbReference>
<dbReference type="PANTHER" id="PTHR11760">
    <property type="entry name" value="30S/40S RIBOSOMAL PROTEIN S3"/>
    <property type="match status" value="1"/>
</dbReference>
<dbReference type="PANTHER" id="PTHR11760:SF19">
    <property type="entry name" value="SMALL RIBOSOMAL SUBUNIT PROTEIN US3C"/>
    <property type="match status" value="1"/>
</dbReference>
<dbReference type="Pfam" id="PF07650">
    <property type="entry name" value="KH_2"/>
    <property type="match status" value="1"/>
</dbReference>
<dbReference type="Pfam" id="PF00189">
    <property type="entry name" value="Ribosomal_S3_C"/>
    <property type="match status" value="1"/>
</dbReference>
<dbReference type="SMART" id="SM00322">
    <property type="entry name" value="KH"/>
    <property type="match status" value="1"/>
</dbReference>
<dbReference type="SUPFAM" id="SSF54814">
    <property type="entry name" value="Prokaryotic type KH domain (KH-domain type II)"/>
    <property type="match status" value="1"/>
</dbReference>
<dbReference type="SUPFAM" id="SSF54821">
    <property type="entry name" value="Ribosomal protein S3 C-terminal domain"/>
    <property type="match status" value="1"/>
</dbReference>
<dbReference type="PROSITE" id="PS50823">
    <property type="entry name" value="KH_TYPE_2"/>
    <property type="match status" value="1"/>
</dbReference>
<dbReference type="PROSITE" id="PS00548">
    <property type="entry name" value="RIBOSOMAL_S3"/>
    <property type="match status" value="1"/>
</dbReference>
<protein>
    <recommendedName>
        <fullName evidence="1">Small ribosomal subunit protein uS3</fullName>
    </recommendedName>
    <alternativeName>
        <fullName evidence="2">30S ribosomal protein S3</fullName>
    </alternativeName>
</protein>